<keyword id="KW-0165">Cleavage on pair of basic residues</keyword>
<keyword id="KW-1015">Disulfide bond</keyword>
<keyword id="KW-0272">Extracellular matrix</keyword>
<keyword id="KW-0325">Glycoprotein</keyword>
<keyword id="KW-0339">Growth factor</keyword>
<keyword id="KW-0497">Mitogen</keyword>
<keyword id="KW-1185">Reference proteome</keyword>
<keyword id="KW-0964">Secreted</keyword>
<keyword id="KW-0732">Signal</keyword>
<sequence length="412" mass="47606">MHCYLLSVFLTLDLAAVALSLSTCSTLDMDQFMRKRIEAIRGQILSKLKLTSPPDEYPEPEEVPPEVISIYNSTRDLLQEKANHRAATCERERSDEEYYAKEVYKIDMQPFYPENAIPPSYYSLYFRIVRFDVSAMEKNASNLVKAEFRVFRLQNSKARVSEQRIELYQVLKSKELSSPGQRYIDSKVVKTRAEGEWLSFDVTEAVHEWLHHRDRNLGFKISLHCPCCTFVPSNNYIIPNKSEEPEARFAGIDDYTYSSGDVKALKSNRKKYSGKTPHLLLMLLPSYRLESQQPSRRKKRALDAAYCFRNVQDNCCLRPLYIDFKRDLGWKWIHEPKGYHANFCAGACPYLWSSDTQHSRVLSLYNTINPEASASPCCVSQDLEPLTILYYIGKTPKIEQLSNMIVKSCKCS</sequence>
<comment type="function">
    <molecule>Transforming growth factor beta-2 proprotein</molecule>
    <text evidence="1 2">Precursor of the Latency-associated peptide (LAP) and Transforming growth factor beta-2 (TGF-beta-2) chains, which constitute the regulatory and active subunit of TGF-beta-2, respectively.</text>
</comment>
<comment type="function">
    <molecule>Latency-associated peptide</molecule>
    <text evidence="1 2">Required to maintain the Transforming growth factor beta-2 (TGF-beta-2) chain in a latent state during storage in extracellular matrix. Associates non-covalently with TGF-beta-2 and regulates its activation via interaction with 'milieu molecules', such as LTBP1 and LRRC32/GARP, that control activation of TGF-beta-2.</text>
</comment>
<comment type="function">
    <molecule>Transforming growth factor beta-2</molecule>
    <text evidence="1 2 3">Multifunctional protein that regulates various processes such as angiogenesis and heart development (By similarity). Activation into mature form follows different steps: following cleavage of the proprotein in the Golgi apparatus, Latency-associated peptide (LAP) and Transforming growth factor beta-2 (TGF-beta-2) chains remain non-covalently linked rendering TGF-beta-2 inactive during storage in extracellular matrix (By similarity). At the same time, LAP chain interacts with 'milieu molecules', such as LTBP1 and LRRC32/GARP, that control activation of TGF-beta-2 and maintain it in a latent state during storage in extracellular milieus (By similarity). Once activated following release of LAP, TGF-beta-2 acts by binding to TGF-beta receptors (TGFBR1 and TGFBR2), which transduce signal (By similarity).</text>
</comment>
<comment type="subunit">
    <molecule>Latency-associated peptide</molecule>
    <text evidence="1 3">Interacts with Transforming growth factor beta-2 (TGF-beta-2) chain; interaction is non-covalent and maintains (TGF-beta-2) in a latent state (By similarity).</text>
</comment>
<comment type="subunit">
    <molecule>Transforming growth factor beta-2</molecule>
    <text evidence="1 3">Homodimer; disulfide-linked (By similarity). Interacts with TGF-beta receptors (TGFBR1 and TGFBR2), leading to signal transduction (By similarity).</text>
</comment>
<comment type="subcellular location">
    <molecule>Latency-associated peptide</molecule>
    <subcellularLocation>
        <location evidence="1">Secreted</location>
        <location evidence="1">Extracellular space</location>
        <location evidence="1">Extracellular matrix</location>
    </subcellularLocation>
</comment>
<comment type="subcellular location">
    <molecule>Transforming growth factor beta-2</molecule>
    <subcellularLocation>
        <location evidence="1">Secreted</location>
    </subcellularLocation>
</comment>
<comment type="PTM">
    <molecule>Transforming growth factor beta-2</molecule>
    <text evidence="1">The precursor proprotein is cleaved in the Golgi apparatus to form Transforming growth factor beta-2 (TGF-beta-2) and Latency-associated peptide (LAP) chains, which remain non-covalently linked, rendering TGF-beta-2 inactive.</text>
</comment>
<comment type="similarity">
    <text evidence="5">Belongs to the TGF-beta family.</text>
</comment>
<name>TGFB2_CHICK</name>
<reference key="1">
    <citation type="journal article" date="1991" name="DNA Cell Biol.">
        <title>Molecular cloning and primary structure of the chicken transforming growth factor-beta 2 gene.</title>
        <authorList>
            <person name="Burt D.W."/>
            <person name="Paton I.R."/>
        </authorList>
    </citation>
    <scope>NUCLEOTIDE SEQUENCE [GENOMIC DNA]</scope>
    <source>
        <strain>White leghorn</strain>
        <tissue>Blood</tissue>
    </source>
</reference>
<reference key="2">
    <citation type="journal article" date="1990" name="Growth Factors">
        <title>Complementary deoxyribonucleic acid cloning of an mRNA encoding transforming growth factor-beta 2 from chicken embryo chondrocytes.</title>
        <authorList>
            <person name="Jakowlew S.B."/>
            <person name="Dillard P.J."/>
            <person name="Sporn M.B."/>
            <person name="Roberts A.B."/>
        </authorList>
    </citation>
    <scope>NUCLEOTIDE SEQUENCE [GENOMIC DNA]</scope>
    <source>
        <tissue>Chondrocyte</tissue>
    </source>
</reference>
<evidence type="ECO:0000250" key="1">
    <source>
        <dbReference type="UniProtKB" id="P01137"/>
    </source>
</evidence>
<evidence type="ECO:0000250" key="2">
    <source>
        <dbReference type="UniProtKB" id="P04202"/>
    </source>
</evidence>
<evidence type="ECO:0000250" key="3">
    <source>
        <dbReference type="UniProtKB" id="P61812"/>
    </source>
</evidence>
<evidence type="ECO:0000255" key="4"/>
<evidence type="ECO:0000305" key="5"/>
<organism>
    <name type="scientific">Gallus gallus</name>
    <name type="common">Chicken</name>
    <dbReference type="NCBI Taxonomy" id="9031"/>
    <lineage>
        <taxon>Eukaryota</taxon>
        <taxon>Metazoa</taxon>
        <taxon>Chordata</taxon>
        <taxon>Craniata</taxon>
        <taxon>Vertebrata</taxon>
        <taxon>Euteleostomi</taxon>
        <taxon>Archelosauria</taxon>
        <taxon>Archosauria</taxon>
        <taxon>Dinosauria</taxon>
        <taxon>Saurischia</taxon>
        <taxon>Theropoda</taxon>
        <taxon>Coelurosauria</taxon>
        <taxon>Aves</taxon>
        <taxon>Neognathae</taxon>
        <taxon>Galloanserae</taxon>
        <taxon>Galliformes</taxon>
        <taxon>Phasianidae</taxon>
        <taxon>Phasianinae</taxon>
        <taxon>Gallus</taxon>
    </lineage>
</organism>
<protein>
    <recommendedName>
        <fullName>Transforming growth factor beta-2 proprotein</fullName>
    </recommendedName>
    <component>
        <recommendedName>
            <fullName>Latency-associated peptide</fullName>
            <shortName>LAP</shortName>
        </recommendedName>
    </component>
    <component>
        <recommendedName>
            <fullName>Transforming growth factor beta-2</fullName>
            <shortName>TGF-beta-2</shortName>
        </recommendedName>
    </component>
</protein>
<dbReference type="EMBL" id="X58071">
    <property type="protein sequence ID" value="CAA41101.1"/>
    <property type="molecule type" value="Genomic_DNA"/>
</dbReference>
<dbReference type="EMBL" id="X59082">
    <property type="protein sequence ID" value="CAA41101.1"/>
    <property type="status" value="JOINED"/>
    <property type="molecule type" value="Genomic_DNA"/>
</dbReference>
<dbReference type="EMBL" id="X59081">
    <property type="protein sequence ID" value="CAA41101.1"/>
    <property type="status" value="JOINED"/>
    <property type="molecule type" value="Genomic_DNA"/>
</dbReference>
<dbReference type="EMBL" id="X59080">
    <property type="protein sequence ID" value="CAA41101.1"/>
    <property type="status" value="JOINED"/>
    <property type="molecule type" value="Genomic_DNA"/>
</dbReference>
<dbReference type="PIR" id="A39489">
    <property type="entry name" value="A39489"/>
</dbReference>
<dbReference type="SMR" id="P30371"/>
<dbReference type="FunCoup" id="P30371">
    <property type="interactions" value="99"/>
</dbReference>
<dbReference type="STRING" id="9031.ENSGALP00000031309"/>
<dbReference type="GlyCosmos" id="P30371">
    <property type="glycosylation" value="3 sites, No reported glycans"/>
</dbReference>
<dbReference type="GlyGen" id="P30371">
    <property type="glycosylation" value="3 sites"/>
</dbReference>
<dbReference type="PaxDb" id="9031-ENSGALP00000031309"/>
<dbReference type="VEuPathDB" id="HostDB:geneid_421352"/>
<dbReference type="eggNOG" id="KOG3900">
    <property type="taxonomic scope" value="Eukaryota"/>
</dbReference>
<dbReference type="InParanoid" id="P30371"/>
<dbReference type="OrthoDB" id="6092228at2759"/>
<dbReference type="PhylomeDB" id="P30371"/>
<dbReference type="Proteomes" id="UP000000539">
    <property type="component" value="Unassembled WGS sequence"/>
</dbReference>
<dbReference type="GO" id="GO:0030424">
    <property type="term" value="C:axon"/>
    <property type="evidence" value="ECO:0000250"/>
    <property type="project" value="UniProtKB"/>
</dbReference>
<dbReference type="GO" id="GO:0031012">
    <property type="term" value="C:extracellular matrix"/>
    <property type="evidence" value="ECO:0000250"/>
    <property type="project" value="UniProtKB"/>
</dbReference>
<dbReference type="GO" id="GO:0005576">
    <property type="term" value="C:extracellular region"/>
    <property type="evidence" value="ECO:0000250"/>
    <property type="project" value="UniProtKB"/>
</dbReference>
<dbReference type="GO" id="GO:0005615">
    <property type="term" value="C:extracellular space"/>
    <property type="evidence" value="ECO:0000314"/>
    <property type="project" value="AgBase"/>
</dbReference>
<dbReference type="GO" id="GO:0043025">
    <property type="term" value="C:neuronal cell body"/>
    <property type="evidence" value="ECO:0000250"/>
    <property type="project" value="UniProtKB"/>
</dbReference>
<dbReference type="GO" id="GO:0001540">
    <property type="term" value="F:amyloid-beta binding"/>
    <property type="evidence" value="ECO:0000250"/>
    <property type="project" value="UniProtKB"/>
</dbReference>
<dbReference type="GO" id="GO:0005125">
    <property type="term" value="F:cytokine activity"/>
    <property type="evidence" value="ECO:0000318"/>
    <property type="project" value="GO_Central"/>
</dbReference>
<dbReference type="GO" id="GO:0008083">
    <property type="term" value="F:growth factor activity"/>
    <property type="evidence" value="ECO:0007669"/>
    <property type="project" value="UniProtKB-KW"/>
</dbReference>
<dbReference type="GO" id="GO:0042803">
    <property type="term" value="F:protein homodimerization activity"/>
    <property type="evidence" value="ECO:0000250"/>
    <property type="project" value="UniProtKB"/>
</dbReference>
<dbReference type="GO" id="GO:0005102">
    <property type="term" value="F:signaling receptor binding"/>
    <property type="evidence" value="ECO:0000250"/>
    <property type="project" value="UniProtKB"/>
</dbReference>
<dbReference type="GO" id="GO:0005160">
    <property type="term" value="F:transforming growth factor beta receptor binding"/>
    <property type="evidence" value="ECO:0000250"/>
    <property type="project" value="UniProtKB"/>
</dbReference>
<dbReference type="GO" id="GO:0005114">
    <property type="term" value="F:type II transforming growth factor beta receptor binding"/>
    <property type="evidence" value="ECO:0000250"/>
    <property type="project" value="UniProtKB"/>
</dbReference>
<dbReference type="GO" id="GO:0034714">
    <property type="term" value="F:type III transforming growth factor beta receptor binding"/>
    <property type="evidence" value="ECO:0000247"/>
    <property type="project" value="AgBase"/>
</dbReference>
<dbReference type="GO" id="GO:0032147">
    <property type="term" value="P:activation of protein kinase activity"/>
    <property type="evidence" value="ECO:0000247"/>
    <property type="project" value="AgBase"/>
</dbReference>
<dbReference type="GO" id="GO:0048513">
    <property type="term" value="P:animal organ development"/>
    <property type="evidence" value="ECO:0000304"/>
    <property type="project" value="AgBase"/>
</dbReference>
<dbReference type="GO" id="GO:0060317">
    <property type="term" value="P:cardiac epithelial to mesenchymal transition"/>
    <property type="evidence" value="ECO:0000250"/>
    <property type="project" value="UniProtKB"/>
</dbReference>
<dbReference type="GO" id="GO:0060038">
    <property type="term" value="P:cardiac muscle cell proliferation"/>
    <property type="evidence" value="ECO:0000250"/>
    <property type="project" value="UniProtKB"/>
</dbReference>
<dbReference type="GO" id="GO:0010002">
    <property type="term" value="P:cardioblast differentiation"/>
    <property type="evidence" value="ECO:0000250"/>
    <property type="project" value="UniProtKB"/>
</dbReference>
<dbReference type="GO" id="GO:0051216">
    <property type="term" value="P:cartilage development"/>
    <property type="evidence" value="ECO:0000304"/>
    <property type="project" value="AgBase"/>
</dbReference>
<dbReference type="GO" id="GO:0008219">
    <property type="term" value="P:cell death"/>
    <property type="evidence" value="ECO:0000247"/>
    <property type="project" value="AgBase"/>
</dbReference>
<dbReference type="GO" id="GO:0016477">
    <property type="term" value="P:cell migration"/>
    <property type="evidence" value="ECO:0000250"/>
    <property type="project" value="UniProtKB"/>
</dbReference>
<dbReference type="GO" id="GO:0000902">
    <property type="term" value="P:cell morphogenesis"/>
    <property type="evidence" value="ECO:0000250"/>
    <property type="project" value="UniProtKB"/>
</dbReference>
<dbReference type="GO" id="GO:0045216">
    <property type="term" value="P:cell-cell junction organization"/>
    <property type="evidence" value="ECO:0000250"/>
    <property type="project" value="UniProtKB"/>
</dbReference>
<dbReference type="GO" id="GO:0030199">
    <property type="term" value="P:collagen fibril organization"/>
    <property type="evidence" value="ECO:0000250"/>
    <property type="project" value="UniProtKB"/>
</dbReference>
<dbReference type="GO" id="GO:0042416">
    <property type="term" value="P:dopamine biosynthetic process"/>
    <property type="evidence" value="ECO:0000250"/>
    <property type="project" value="UniProtKB"/>
</dbReference>
<dbReference type="GO" id="GO:0009792">
    <property type="term" value="P:embryo development ending in birth or egg hatching"/>
    <property type="evidence" value="ECO:0000270"/>
    <property type="project" value="AgBase"/>
</dbReference>
<dbReference type="GO" id="GO:0048566">
    <property type="term" value="P:embryonic digestive tract development"/>
    <property type="evidence" value="ECO:0000270"/>
    <property type="project" value="AgBase"/>
</dbReference>
<dbReference type="GO" id="GO:0048568">
    <property type="term" value="P:embryonic organ development"/>
    <property type="evidence" value="ECO:0000270"/>
    <property type="project" value="AgBase"/>
</dbReference>
<dbReference type="GO" id="GO:0042118">
    <property type="term" value="P:endothelial cell activation"/>
    <property type="evidence" value="ECO:0000303"/>
    <property type="project" value="AgBase"/>
</dbReference>
<dbReference type="GO" id="GO:0030855">
    <property type="term" value="P:epithelial cell differentiation"/>
    <property type="evidence" value="ECO:0000250"/>
    <property type="project" value="UniProtKB"/>
</dbReference>
<dbReference type="GO" id="GO:0001837">
    <property type="term" value="P:epithelial to mesenchymal transition"/>
    <property type="evidence" value="ECO:0000250"/>
    <property type="project" value="UniProtKB"/>
</dbReference>
<dbReference type="GO" id="GO:0003198">
    <property type="term" value="P:epithelial to mesenchymal transition involved in endocardial cushion formation"/>
    <property type="evidence" value="ECO:0000304"/>
    <property type="project" value="DFLAT"/>
</dbReference>
<dbReference type="GO" id="GO:0097191">
    <property type="term" value="P:extrinsic apoptotic signaling pathway"/>
    <property type="evidence" value="ECO:0000250"/>
    <property type="project" value="UniProtKB"/>
</dbReference>
<dbReference type="GO" id="GO:0001654">
    <property type="term" value="P:eye development"/>
    <property type="evidence" value="ECO:0000270"/>
    <property type="project" value="AgBase"/>
</dbReference>
<dbReference type="GO" id="GO:0008585">
    <property type="term" value="P:female gonad development"/>
    <property type="evidence" value="ECO:0000270"/>
    <property type="project" value="AgBase"/>
</dbReference>
<dbReference type="GO" id="GO:0008347">
    <property type="term" value="P:glial cell migration"/>
    <property type="evidence" value="ECO:0000250"/>
    <property type="project" value="UniProtKB"/>
</dbReference>
<dbReference type="GO" id="GO:0008406">
    <property type="term" value="P:gonad development"/>
    <property type="evidence" value="ECO:0000304"/>
    <property type="project" value="AgBase"/>
</dbReference>
<dbReference type="GO" id="GO:0007507">
    <property type="term" value="P:heart development"/>
    <property type="evidence" value="ECO:0000270"/>
    <property type="project" value="AgBase"/>
</dbReference>
<dbReference type="GO" id="GO:0003007">
    <property type="term" value="P:heart morphogenesis"/>
    <property type="evidence" value="ECO:0000250"/>
    <property type="project" value="UniProtKB"/>
</dbReference>
<dbReference type="GO" id="GO:0030097">
    <property type="term" value="P:hemopoiesis"/>
    <property type="evidence" value="ECO:0000250"/>
    <property type="project" value="UniProtKB"/>
</dbReference>
<dbReference type="GO" id="GO:0030324">
    <property type="term" value="P:lung development"/>
    <property type="evidence" value="ECO:0000270"/>
    <property type="project" value="AgBase"/>
</dbReference>
<dbReference type="GO" id="GO:0008584">
    <property type="term" value="P:male gonad development"/>
    <property type="evidence" value="ECO:0000270"/>
    <property type="project" value="AgBase"/>
</dbReference>
<dbReference type="GO" id="GO:0010693">
    <property type="term" value="P:negative regulation of alkaline phosphatase activity"/>
    <property type="evidence" value="ECO:0000247"/>
    <property type="project" value="AgBase"/>
</dbReference>
<dbReference type="GO" id="GO:0007162">
    <property type="term" value="P:negative regulation of cell adhesion"/>
    <property type="evidence" value="ECO:0000304"/>
    <property type="project" value="AgBase"/>
</dbReference>
<dbReference type="GO" id="GO:0030308">
    <property type="term" value="P:negative regulation of cell growth"/>
    <property type="evidence" value="ECO:0000247"/>
    <property type="project" value="AgBase"/>
</dbReference>
<dbReference type="GO" id="GO:0008285">
    <property type="term" value="P:negative regulation of cell population proliferation"/>
    <property type="evidence" value="ECO:0000250"/>
    <property type="project" value="UniProtKB"/>
</dbReference>
<dbReference type="GO" id="GO:0050680">
    <property type="term" value="P:negative regulation of epithelial cell proliferation"/>
    <property type="evidence" value="ECO:0000250"/>
    <property type="project" value="UniProtKB"/>
</dbReference>
<dbReference type="GO" id="GO:0010936">
    <property type="term" value="P:negative regulation of macrophage cytokine production"/>
    <property type="evidence" value="ECO:0000250"/>
    <property type="project" value="UniProtKB"/>
</dbReference>
<dbReference type="GO" id="GO:0007399">
    <property type="term" value="P:nervous system development"/>
    <property type="evidence" value="ECO:0000304"/>
    <property type="project" value="AgBase"/>
</dbReference>
<dbReference type="GO" id="GO:0021915">
    <property type="term" value="P:neural tube development"/>
    <property type="evidence" value="ECO:0000270"/>
    <property type="project" value="AgBase"/>
</dbReference>
<dbReference type="GO" id="GO:0048666">
    <property type="term" value="P:neuron development"/>
    <property type="evidence" value="ECO:0000250"/>
    <property type="project" value="UniProtKB"/>
</dbReference>
<dbReference type="GO" id="GO:0030593">
    <property type="term" value="P:neutrophil chemotaxis"/>
    <property type="evidence" value="ECO:0000250"/>
    <property type="project" value="UniProtKB"/>
</dbReference>
<dbReference type="GO" id="GO:0051891">
    <property type="term" value="P:positive regulation of cardioblast differentiation"/>
    <property type="evidence" value="ECO:0000250"/>
    <property type="project" value="UniProtKB"/>
</dbReference>
<dbReference type="GO" id="GO:0033630">
    <property type="term" value="P:positive regulation of cell adhesion mediated by integrin"/>
    <property type="evidence" value="ECO:0000250"/>
    <property type="project" value="UniProtKB"/>
</dbReference>
<dbReference type="GO" id="GO:0045787">
    <property type="term" value="P:positive regulation of cell cycle"/>
    <property type="evidence" value="ECO:0000250"/>
    <property type="project" value="UniProtKB"/>
</dbReference>
<dbReference type="GO" id="GO:0051781">
    <property type="term" value="P:positive regulation of cell division"/>
    <property type="evidence" value="ECO:0007669"/>
    <property type="project" value="UniProtKB-KW"/>
</dbReference>
<dbReference type="GO" id="GO:0030307">
    <property type="term" value="P:positive regulation of cell growth"/>
    <property type="evidence" value="ECO:0000250"/>
    <property type="project" value="UniProtKB"/>
</dbReference>
<dbReference type="GO" id="GO:0008284">
    <property type="term" value="P:positive regulation of cell population proliferation"/>
    <property type="evidence" value="ECO:0000250"/>
    <property type="project" value="UniProtKB"/>
</dbReference>
<dbReference type="GO" id="GO:0010634">
    <property type="term" value="P:positive regulation of epithelial cell migration"/>
    <property type="evidence" value="ECO:0000250"/>
    <property type="project" value="UniProtKB"/>
</dbReference>
<dbReference type="GO" id="GO:0010718">
    <property type="term" value="P:positive regulation of epithelial to mesenchymal transition"/>
    <property type="evidence" value="ECO:0000250"/>
    <property type="project" value="UniProtKB"/>
</dbReference>
<dbReference type="GO" id="GO:0045823">
    <property type="term" value="P:positive regulation of heart contraction"/>
    <property type="evidence" value="ECO:0000250"/>
    <property type="project" value="UniProtKB"/>
</dbReference>
<dbReference type="GO" id="GO:0050778">
    <property type="term" value="P:positive regulation of immune response"/>
    <property type="evidence" value="ECO:0000250"/>
    <property type="project" value="UniProtKB"/>
</dbReference>
<dbReference type="GO" id="GO:0045726">
    <property type="term" value="P:positive regulation of integrin biosynthetic process"/>
    <property type="evidence" value="ECO:0000250"/>
    <property type="project" value="UniProtKB"/>
</dbReference>
<dbReference type="GO" id="GO:0043525">
    <property type="term" value="P:positive regulation of neuron apoptotic process"/>
    <property type="evidence" value="ECO:0000250"/>
    <property type="project" value="UniProtKB"/>
</dbReference>
<dbReference type="GO" id="GO:0045778">
    <property type="term" value="P:positive regulation of ossification"/>
    <property type="evidence" value="ECO:0000247"/>
    <property type="project" value="AgBase"/>
</dbReference>
<dbReference type="GO" id="GO:0051897">
    <property type="term" value="P:positive regulation of phosphatidylinositol 3-kinase/protein kinase B signal transduction"/>
    <property type="evidence" value="ECO:0000250"/>
    <property type="project" value="UniProtKB"/>
</dbReference>
<dbReference type="GO" id="GO:0050714">
    <property type="term" value="P:positive regulation of protein secretion"/>
    <property type="evidence" value="ECO:0000250"/>
    <property type="project" value="UniProtKB"/>
</dbReference>
<dbReference type="GO" id="GO:0060391">
    <property type="term" value="P:positive regulation of SMAD protein signal transduction"/>
    <property type="evidence" value="ECO:0000250"/>
    <property type="project" value="UniProtKB"/>
</dbReference>
<dbReference type="GO" id="GO:0032874">
    <property type="term" value="P:positive regulation of stress-activated MAPK cascade"/>
    <property type="evidence" value="ECO:0000250"/>
    <property type="project" value="UniProtKB"/>
</dbReference>
<dbReference type="GO" id="GO:0051795">
    <property type="term" value="P:positive regulation of timing of catagen"/>
    <property type="evidence" value="ECO:0000250"/>
    <property type="project" value="UniProtKB"/>
</dbReference>
<dbReference type="GO" id="GO:0006468">
    <property type="term" value="P:protein phosphorylation"/>
    <property type="evidence" value="ECO:0000247"/>
    <property type="project" value="AgBase"/>
</dbReference>
<dbReference type="GO" id="GO:0051726">
    <property type="term" value="P:regulation of cell cycle"/>
    <property type="evidence" value="ECO:0000247"/>
    <property type="project" value="AgBase"/>
</dbReference>
<dbReference type="GO" id="GO:0045595">
    <property type="term" value="P:regulation of cell differentiation"/>
    <property type="evidence" value="ECO:0000303"/>
    <property type="project" value="AgBase"/>
</dbReference>
<dbReference type="GO" id="GO:0042127">
    <property type="term" value="P:regulation of cell population proliferation"/>
    <property type="evidence" value="ECO:0000250"/>
    <property type="project" value="UniProtKB"/>
</dbReference>
<dbReference type="GO" id="GO:1903659">
    <property type="term" value="P:regulation of complement-dependent cytotoxicity"/>
    <property type="evidence" value="ECO:0000247"/>
    <property type="project" value="AgBase"/>
</dbReference>
<dbReference type="GO" id="GO:0040008">
    <property type="term" value="P:regulation of growth"/>
    <property type="evidence" value="ECO:0000303"/>
    <property type="project" value="AgBase"/>
</dbReference>
<dbReference type="GO" id="GO:0060390">
    <property type="term" value="P:regulation of SMAD protein signal transduction"/>
    <property type="evidence" value="ECO:0000247"/>
    <property type="project" value="AgBase"/>
</dbReference>
<dbReference type="GO" id="GO:0032909">
    <property type="term" value="P:regulation of transforming growth factor beta2 production"/>
    <property type="evidence" value="ECO:0000250"/>
    <property type="project" value="UniProtKB"/>
</dbReference>
<dbReference type="GO" id="GO:0060416">
    <property type="term" value="P:response to growth hormone"/>
    <property type="evidence" value="ECO:0000270"/>
    <property type="project" value="AgBase"/>
</dbReference>
<dbReference type="GO" id="GO:0001666">
    <property type="term" value="P:response to hypoxia"/>
    <property type="evidence" value="ECO:0000250"/>
    <property type="project" value="UniProtKB"/>
</dbReference>
<dbReference type="GO" id="GO:0032570">
    <property type="term" value="P:response to progesterone"/>
    <property type="evidence" value="ECO:0000250"/>
    <property type="project" value="UniProtKB"/>
</dbReference>
<dbReference type="GO" id="GO:0009615">
    <property type="term" value="P:response to virus"/>
    <property type="evidence" value="ECO:0000314"/>
    <property type="project" value="AgBase"/>
</dbReference>
<dbReference type="GO" id="GO:0009611">
    <property type="term" value="P:response to wounding"/>
    <property type="evidence" value="ECO:0000247"/>
    <property type="project" value="AgBase"/>
</dbReference>
<dbReference type="GO" id="GO:0009410">
    <property type="term" value="P:response to xenobiotic stimulus"/>
    <property type="evidence" value="ECO:0000247"/>
    <property type="project" value="AgBase"/>
</dbReference>
<dbReference type="GO" id="GO:0007435">
    <property type="term" value="P:salivary gland morphogenesis"/>
    <property type="evidence" value="ECO:0000247"/>
    <property type="project" value="AgBase"/>
</dbReference>
<dbReference type="GO" id="GO:0007165">
    <property type="term" value="P:signal transduction"/>
    <property type="evidence" value="ECO:0000247"/>
    <property type="project" value="AgBase"/>
</dbReference>
<dbReference type="GO" id="GO:0023052">
    <property type="term" value="P:signaling"/>
    <property type="evidence" value="ECO:0000250"/>
    <property type="project" value="UniProtKB"/>
</dbReference>
<dbReference type="GO" id="GO:0007519">
    <property type="term" value="P:skeletal muscle tissue development"/>
    <property type="evidence" value="ECO:0000270"/>
    <property type="project" value="AgBase"/>
</dbReference>
<dbReference type="GO" id="GO:0048103">
    <property type="term" value="P:somatic stem cell division"/>
    <property type="evidence" value="ECO:0000250"/>
    <property type="project" value="UniProtKB"/>
</dbReference>
<dbReference type="GO" id="GO:0001756">
    <property type="term" value="P:somitogenesis"/>
    <property type="evidence" value="ECO:0000270"/>
    <property type="project" value="AgBase"/>
</dbReference>
<dbReference type="GO" id="GO:0048536">
    <property type="term" value="P:spleen development"/>
    <property type="evidence" value="ECO:0000270"/>
    <property type="project" value="AgBase"/>
</dbReference>
<dbReference type="GO" id="GO:0007179">
    <property type="term" value="P:transforming growth factor beta receptor signaling pathway"/>
    <property type="evidence" value="ECO:0000250"/>
    <property type="project" value="UniProtKB"/>
</dbReference>
<dbReference type="GO" id="GO:0042060">
    <property type="term" value="P:wound healing"/>
    <property type="evidence" value="ECO:0000250"/>
    <property type="project" value="UniProtKB"/>
</dbReference>
<dbReference type="CDD" id="cd19385">
    <property type="entry name" value="TGF_beta_TGFB2"/>
    <property type="match status" value="1"/>
</dbReference>
<dbReference type="FunFam" id="2.10.90.10:FF:000004">
    <property type="entry name" value="Transforming growth factor beta"/>
    <property type="match status" value="1"/>
</dbReference>
<dbReference type="FunFam" id="2.60.120.970:FF:000002">
    <property type="entry name" value="Transforming growth factor beta"/>
    <property type="match status" value="1"/>
</dbReference>
<dbReference type="Gene3D" id="2.60.120.970">
    <property type="match status" value="1"/>
</dbReference>
<dbReference type="Gene3D" id="2.10.90.10">
    <property type="entry name" value="Cystine-knot cytokines"/>
    <property type="match status" value="1"/>
</dbReference>
<dbReference type="InterPro" id="IPR029034">
    <property type="entry name" value="Cystine-knot_cytokine"/>
</dbReference>
<dbReference type="InterPro" id="IPR001839">
    <property type="entry name" value="TGF-b_C"/>
</dbReference>
<dbReference type="InterPro" id="IPR001111">
    <property type="entry name" value="TGF-b_propeptide"/>
</dbReference>
<dbReference type="InterPro" id="IPR016319">
    <property type="entry name" value="TGF-beta"/>
</dbReference>
<dbReference type="InterPro" id="IPR015615">
    <property type="entry name" value="TGF-beta-rel"/>
</dbReference>
<dbReference type="InterPro" id="IPR003940">
    <property type="entry name" value="TGFb2"/>
</dbReference>
<dbReference type="InterPro" id="IPR017948">
    <property type="entry name" value="TGFb_CS"/>
</dbReference>
<dbReference type="PANTHER" id="PTHR11848">
    <property type="entry name" value="TGF-BETA FAMILY"/>
    <property type="match status" value="1"/>
</dbReference>
<dbReference type="PANTHER" id="PTHR11848:SF141">
    <property type="entry name" value="TRANSFORMING GROWTH FACTOR BETA-2 PROPROTEIN"/>
    <property type="match status" value="1"/>
</dbReference>
<dbReference type="Pfam" id="PF00019">
    <property type="entry name" value="TGF_beta"/>
    <property type="match status" value="1"/>
</dbReference>
<dbReference type="Pfam" id="PF00688">
    <property type="entry name" value="TGFb_propeptide"/>
    <property type="match status" value="1"/>
</dbReference>
<dbReference type="PIRSF" id="PIRSF001787">
    <property type="entry name" value="TGF-beta"/>
    <property type="match status" value="1"/>
</dbReference>
<dbReference type="PRINTS" id="PR01423">
    <property type="entry name" value="TGFBETA"/>
</dbReference>
<dbReference type="PRINTS" id="PR01425">
    <property type="entry name" value="TGFBETA2"/>
</dbReference>
<dbReference type="SMART" id="SM00204">
    <property type="entry name" value="TGFB"/>
    <property type="match status" value="1"/>
</dbReference>
<dbReference type="SUPFAM" id="SSF57501">
    <property type="entry name" value="Cystine-knot cytokines"/>
    <property type="match status" value="1"/>
</dbReference>
<dbReference type="PROSITE" id="PS00250">
    <property type="entry name" value="TGF_BETA_1"/>
    <property type="match status" value="1"/>
</dbReference>
<dbReference type="PROSITE" id="PS51362">
    <property type="entry name" value="TGF_BETA_2"/>
    <property type="match status" value="1"/>
</dbReference>
<gene>
    <name type="primary">TGFB2</name>
</gene>
<proteinExistence type="inferred from homology"/>
<feature type="signal peptide" evidence="4">
    <location>
        <begin position="1"/>
        <end position="20"/>
    </location>
</feature>
<feature type="chain" id="PRO_0000456185" description="Transforming growth factor beta-2 proprotein">
    <location>
        <begin position="21"/>
        <end position="412"/>
    </location>
</feature>
<feature type="chain" id="PRO_0000033792" description="Latency-associated peptide" evidence="3">
    <location>
        <begin position="21"/>
        <end position="300"/>
    </location>
</feature>
<feature type="chain" id="PRO_0000033793" description="Transforming growth factor beta-2" evidence="3">
    <location>
        <begin position="301"/>
        <end position="412"/>
    </location>
</feature>
<feature type="glycosylation site" description="N-linked (GlcNAc...) asparagine" evidence="4">
    <location>
        <position position="72"/>
    </location>
</feature>
<feature type="glycosylation site" description="N-linked (GlcNAc...) asparagine" evidence="4">
    <location>
        <position position="139"/>
    </location>
</feature>
<feature type="glycosylation site" description="N-linked (GlcNAc...) asparagine" evidence="4">
    <location>
        <position position="240"/>
    </location>
</feature>
<feature type="disulfide bond" evidence="3">
    <location>
        <begin position="307"/>
        <end position="316"/>
    </location>
</feature>
<feature type="disulfide bond" evidence="3">
    <location>
        <begin position="315"/>
        <end position="378"/>
    </location>
</feature>
<feature type="disulfide bond" evidence="3">
    <location>
        <begin position="344"/>
        <end position="409"/>
    </location>
</feature>
<feature type="disulfide bond" evidence="3">
    <location>
        <begin position="348"/>
        <end position="411"/>
    </location>
</feature>
<feature type="disulfide bond" description="Interchain" evidence="3">
    <location>
        <position position="377"/>
    </location>
</feature>
<accession>P30371</accession>